<organism>
    <name type="scientific">Chloroherpeton thalassium (strain ATCC 35110 / GB-78)</name>
    <dbReference type="NCBI Taxonomy" id="517418"/>
    <lineage>
        <taxon>Bacteria</taxon>
        <taxon>Pseudomonadati</taxon>
        <taxon>Chlorobiota</taxon>
        <taxon>Chlorobiia</taxon>
        <taxon>Chlorobiales</taxon>
        <taxon>Chloroherpetonaceae</taxon>
        <taxon>Chloroherpeton</taxon>
    </lineage>
</organism>
<name>GATC_CHLT3</name>
<feature type="chain" id="PRO_1000095273" description="Aspartyl/glutamyl-tRNA(Asn/Gln) amidotransferase subunit C">
    <location>
        <begin position="1"/>
        <end position="95"/>
    </location>
</feature>
<comment type="function">
    <text evidence="1">Allows the formation of correctly charged Asn-tRNA(Asn) or Gln-tRNA(Gln) through the transamidation of misacylated Asp-tRNA(Asn) or Glu-tRNA(Gln) in organisms which lack either or both of asparaginyl-tRNA or glutaminyl-tRNA synthetases. The reaction takes place in the presence of glutamine and ATP through an activated phospho-Asp-tRNA(Asn) or phospho-Glu-tRNA(Gln).</text>
</comment>
<comment type="catalytic activity">
    <reaction evidence="1">
        <text>L-glutamyl-tRNA(Gln) + L-glutamine + ATP + H2O = L-glutaminyl-tRNA(Gln) + L-glutamate + ADP + phosphate + H(+)</text>
        <dbReference type="Rhea" id="RHEA:17521"/>
        <dbReference type="Rhea" id="RHEA-COMP:9681"/>
        <dbReference type="Rhea" id="RHEA-COMP:9684"/>
        <dbReference type="ChEBI" id="CHEBI:15377"/>
        <dbReference type="ChEBI" id="CHEBI:15378"/>
        <dbReference type="ChEBI" id="CHEBI:29985"/>
        <dbReference type="ChEBI" id="CHEBI:30616"/>
        <dbReference type="ChEBI" id="CHEBI:43474"/>
        <dbReference type="ChEBI" id="CHEBI:58359"/>
        <dbReference type="ChEBI" id="CHEBI:78520"/>
        <dbReference type="ChEBI" id="CHEBI:78521"/>
        <dbReference type="ChEBI" id="CHEBI:456216"/>
    </reaction>
</comment>
<comment type="catalytic activity">
    <reaction evidence="1">
        <text>L-aspartyl-tRNA(Asn) + L-glutamine + ATP + H2O = L-asparaginyl-tRNA(Asn) + L-glutamate + ADP + phosphate + 2 H(+)</text>
        <dbReference type="Rhea" id="RHEA:14513"/>
        <dbReference type="Rhea" id="RHEA-COMP:9674"/>
        <dbReference type="Rhea" id="RHEA-COMP:9677"/>
        <dbReference type="ChEBI" id="CHEBI:15377"/>
        <dbReference type="ChEBI" id="CHEBI:15378"/>
        <dbReference type="ChEBI" id="CHEBI:29985"/>
        <dbReference type="ChEBI" id="CHEBI:30616"/>
        <dbReference type="ChEBI" id="CHEBI:43474"/>
        <dbReference type="ChEBI" id="CHEBI:58359"/>
        <dbReference type="ChEBI" id="CHEBI:78515"/>
        <dbReference type="ChEBI" id="CHEBI:78516"/>
        <dbReference type="ChEBI" id="CHEBI:456216"/>
    </reaction>
</comment>
<comment type="subunit">
    <text evidence="1">Heterotrimer of A, B and C subunits.</text>
</comment>
<comment type="similarity">
    <text evidence="1">Belongs to the GatC family.</text>
</comment>
<sequence>MSVTKQDVEYIATLARLSFSEDEKEKMTKELNTILHYVEKLNELDTEEVEALNNMNERHNVLRPDEIVASIENSKAIKNAPDSVERFFKVPKVIG</sequence>
<reference key="1">
    <citation type="submission" date="2008-06" db="EMBL/GenBank/DDBJ databases">
        <title>Complete sequence of Chloroherpeton thalassium ATCC 35110.</title>
        <authorList>
            <consortium name="US DOE Joint Genome Institute"/>
            <person name="Lucas S."/>
            <person name="Copeland A."/>
            <person name="Lapidus A."/>
            <person name="Glavina del Rio T."/>
            <person name="Dalin E."/>
            <person name="Tice H."/>
            <person name="Bruce D."/>
            <person name="Goodwin L."/>
            <person name="Pitluck S."/>
            <person name="Schmutz J."/>
            <person name="Larimer F."/>
            <person name="Land M."/>
            <person name="Hauser L."/>
            <person name="Kyrpides N."/>
            <person name="Mikhailova N."/>
            <person name="Liu Z."/>
            <person name="Li T."/>
            <person name="Zhao F."/>
            <person name="Overmann J."/>
            <person name="Bryant D.A."/>
            <person name="Richardson P."/>
        </authorList>
    </citation>
    <scope>NUCLEOTIDE SEQUENCE [LARGE SCALE GENOMIC DNA]</scope>
    <source>
        <strain>ATCC 35110 / GB-78</strain>
    </source>
</reference>
<protein>
    <recommendedName>
        <fullName evidence="1">Aspartyl/glutamyl-tRNA(Asn/Gln) amidotransferase subunit C</fullName>
        <shortName evidence="1">Asp/Glu-ADT subunit C</shortName>
        <ecNumber evidence="1">6.3.5.-</ecNumber>
    </recommendedName>
</protein>
<proteinExistence type="inferred from homology"/>
<dbReference type="EC" id="6.3.5.-" evidence="1"/>
<dbReference type="EMBL" id="CP001100">
    <property type="protein sequence ID" value="ACF12507.1"/>
    <property type="molecule type" value="Genomic_DNA"/>
</dbReference>
<dbReference type="RefSeq" id="WP_012498591.1">
    <property type="nucleotide sequence ID" value="NC_011026.1"/>
</dbReference>
<dbReference type="SMR" id="B3QSB6"/>
<dbReference type="STRING" id="517418.Ctha_0035"/>
<dbReference type="KEGG" id="cts:Ctha_0035"/>
<dbReference type="eggNOG" id="COG0721">
    <property type="taxonomic scope" value="Bacteria"/>
</dbReference>
<dbReference type="HOGENOM" id="CLU_105899_6_1_10"/>
<dbReference type="OrthoDB" id="9813938at2"/>
<dbReference type="Proteomes" id="UP000001208">
    <property type="component" value="Chromosome"/>
</dbReference>
<dbReference type="GO" id="GO:0050566">
    <property type="term" value="F:asparaginyl-tRNA synthase (glutamine-hydrolyzing) activity"/>
    <property type="evidence" value="ECO:0007669"/>
    <property type="project" value="RHEA"/>
</dbReference>
<dbReference type="GO" id="GO:0005524">
    <property type="term" value="F:ATP binding"/>
    <property type="evidence" value="ECO:0007669"/>
    <property type="project" value="UniProtKB-KW"/>
</dbReference>
<dbReference type="GO" id="GO:0050567">
    <property type="term" value="F:glutaminyl-tRNA synthase (glutamine-hydrolyzing) activity"/>
    <property type="evidence" value="ECO:0007669"/>
    <property type="project" value="UniProtKB-UniRule"/>
</dbReference>
<dbReference type="GO" id="GO:0070681">
    <property type="term" value="P:glutaminyl-tRNAGln biosynthesis via transamidation"/>
    <property type="evidence" value="ECO:0007669"/>
    <property type="project" value="TreeGrafter"/>
</dbReference>
<dbReference type="GO" id="GO:0006450">
    <property type="term" value="P:regulation of translational fidelity"/>
    <property type="evidence" value="ECO:0007669"/>
    <property type="project" value="InterPro"/>
</dbReference>
<dbReference type="GO" id="GO:0006412">
    <property type="term" value="P:translation"/>
    <property type="evidence" value="ECO:0007669"/>
    <property type="project" value="UniProtKB-UniRule"/>
</dbReference>
<dbReference type="Gene3D" id="1.10.20.60">
    <property type="entry name" value="Glu-tRNAGln amidotransferase C subunit, N-terminal domain"/>
    <property type="match status" value="1"/>
</dbReference>
<dbReference type="HAMAP" id="MF_00122">
    <property type="entry name" value="GatC"/>
    <property type="match status" value="1"/>
</dbReference>
<dbReference type="InterPro" id="IPR036113">
    <property type="entry name" value="Asp/Glu-ADT_sf_sub_c"/>
</dbReference>
<dbReference type="InterPro" id="IPR003837">
    <property type="entry name" value="GatC"/>
</dbReference>
<dbReference type="NCBIfam" id="TIGR00135">
    <property type="entry name" value="gatC"/>
    <property type="match status" value="1"/>
</dbReference>
<dbReference type="PANTHER" id="PTHR15004">
    <property type="entry name" value="GLUTAMYL-TRNA(GLN) AMIDOTRANSFERASE SUBUNIT C, MITOCHONDRIAL"/>
    <property type="match status" value="1"/>
</dbReference>
<dbReference type="PANTHER" id="PTHR15004:SF0">
    <property type="entry name" value="GLUTAMYL-TRNA(GLN) AMIDOTRANSFERASE SUBUNIT C, MITOCHONDRIAL"/>
    <property type="match status" value="1"/>
</dbReference>
<dbReference type="Pfam" id="PF02686">
    <property type="entry name" value="GatC"/>
    <property type="match status" value="1"/>
</dbReference>
<dbReference type="SUPFAM" id="SSF141000">
    <property type="entry name" value="Glu-tRNAGln amidotransferase C subunit"/>
    <property type="match status" value="1"/>
</dbReference>
<gene>
    <name evidence="1" type="primary">gatC</name>
    <name type="ordered locus">Ctha_0035</name>
</gene>
<evidence type="ECO:0000255" key="1">
    <source>
        <dbReference type="HAMAP-Rule" id="MF_00122"/>
    </source>
</evidence>
<accession>B3QSB6</accession>
<keyword id="KW-0067">ATP-binding</keyword>
<keyword id="KW-0436">Ligase</keyword>
<keyword id="KW-0547">Nucleotide-binding</keyword>
<keyword id="KW-0648">Protein biosynthesis</keyword>
<keyword id="KW-1185">Reference proteome</keyword>